<organism>
    <name type="scientific">Bos taurus</name>
    <name type="common">Bovine</name>
    <dbReference type="NCBI Taxonomy" id="9913"/>
    <lineage>
        <taxon>Eukaryota</taxon>
        <taxon>Metazoa</taxon>
        <taxon>Chordata</taxon>
        <taxon>Craniata</taxon>
        <taxon>Vertebrata</taxon>
        <taxon>Euteleostomi</taxon>
        <taxon>Mammalia</taxon>
        <taxon>Eutheria</taxon>
        <taxon>Laurasiatheria</taxon>
        <taxon>Artiodactyla</taxon>
        <taxon>Ruminantia</taxon>
        <taxon>Pecora</taxon>
        <taxon>Bovidae</taxon>
        <taxon>Bovinae</taxon>
        <taxon>Bos</taxon>
    </lineage>
</organism>
<evidence type="ECO:0000250" key="1">
    <source>
        <dbReference type="UniProtKB" id="P51681"/>
    </source>
</evidence>
<evidence type="ECO:0000250" key="2">
    <source>
        <dbReference type="UniProtKB" id="Q9XT76"/>
    </source>
</evidence>
<evidence type="ECO:0000255" key="3"/>
<evidence type="ECO:0000255" key="4">
    <source>
        <dbReference type="PROSITE-ProRule" id="PRU00521"/>
    </source>
</evidence>
<evidence type="ECO:0000305" key="5"/>
<sequence length="352" mass="40235">MDYQTSTPLYDIDYGMSEPCQKLNVRQIAARLLPPLYSLVFIFGFVGNMLVVLILINCKKLKSMTDIYLLNLAISDLLFIITIPFWAHYAADQWVFGNTMCQLFTGFYFIGYFGGIFFIILLTIDRYLAIVHAVFALKARTVTFGAATSVVTWVVAVFASLPGIIFTKSQKEGSRHTCSPHFPSSQYHFWKNFQTLKIVILGLVLPLLVMIVCYSGIIKTLLRCRNEKKKHKAVRLIFVIMIVYFLFWAPYNIVLLLSTFQEFFGLNNCSGSNRLDQAMQVTETLGMTHCCINPIIYAFVGEKFRNYLLRFFRKYFASRFCKGCPVFQGEAPERVSSVYTRSTGEQEISVGL</sequence>
<accession>Q2HJ17</accession>
<accession>Q5MD63</accession>
<reference key="1">
    <citation type="submission" date="2004-11" db="EMBL/GenBank/DDBJ databases">
        <title>Molecular cloning and characterization of bovine chemokine receptors.</title>
        <authorList>
            <person name="Blumerman S.L."/>
            <person name="Baldwin C.L."/>
        </authorList>
    </citation>
    <scope>NUCLEOTIDE SEQUENCE [MRNA]</scope>
</reference>
<reference key="2">
    <citation type="submission" date="2006-02" db="EMBL/GenBank/DDBJ databases">
        <authorList>
            <consortium name="NIH - Mammalian Gene Collection (MGC) project"/>
        </authorList>
    </citation>
    <scope>NUCLEOTIDE SEQUENCE [LARGE SCALE MRNA]</scope>
    <source>
        <strain>Hereford</strain>
        <tissue>Uterus</tissue>
    </source>
</reference>
<dbReference type="EMBL" id="AY834252">
    <property type="protein sequence ID" value="AAV97929.1"/>
    <property type="molecule type" value="mRNA"/>
</dbReference>
<dbReference type="EMBL" id="BC113355">
    <property type="protein sequence ID" value="AAI13356.1"/>
    <property type="molecule type" value="mRNA"/>
</dbReference>
<dbReference type="RefSeq" id="NP_001011672.2">
    <property type="nucleotide sequence ID" value="NM_001011672.2"/>
</dbReference>
<dbReference type="SMR" id="Q2HJ17"/>
<dbReference type="FunCoup" id="Q2HJ17">
    <property type="interactions" value="570"/>
</dbReference>
<dbReference type="STRING" id="9913.ENSBTAP00000010652"/>
<dbReference type="GlyCosmos" id="Q2HJ17">
    <property type="glycosylation" value="1 site, No reported glycans"/>
</dbReference>
<dbReference type="GlyGen" id="Q2HJ17">
    <property type="glycosylation" value="1 site"/>
</dbReference>
<dbReference type="PaxDb" id="9913-ENSBTAP00000010652"/>
<dbReference type="Ensembl" id="ENSBTAT00000104737.1">
    <property type="protein sequence ID" value="ENSBTAP00000079074.1"/>
    <property type="gene ID" value="ENSBTAG00000067584.1"/>
</dbReference>
<dbReference type="GeneID" id="497017"/>
<dbReference type="KEGG" id="bta:497017"/>
<dbReference type="CTD" id="1234"/>
<dbReference type="VEuPathDB" id="HostDB:ENSBTAG00000008099"/>
<dbReference type="eggNOG" id="KOG3656">
    <property type="taxonomic scope" value="Eukaryota"/>
</dbReference>
<dbReference type="GeneTree" id="ENSGT01020000230359"/>
<dbReference type="HOGENOM" id="CLU_009579_8_3_1"/>
<dbReference type="InParanoid" id="Q2HJ17"/>
<dbReference type="OMA" id="HYTCSPH"/>
<dbReference type="OrthoDB" id="9876908at2759"/>
<dbReference type="TreeFam" id="TF330966"/>
<dbReference type="Reactome" id="R-BTA-380108">
    <property type="pathway name" value="Chemokine receptors bind chemokines"/>
</dbReference>
<dbReference type="Reactome" id="R-BTA-418594">
    <property type="pathway name" value="G alpha (i) signalling events"/>
</dbReference>
<dbReference type="Proteomes" id="UP000009136">
    <property type="component" value="Chromosome 22"/>
</dbReference>
<dbReference type="Bgee" id="ENSBTAG00000008099">
    <property type="expression patterns" value="Expressed in milk and 90 other cell types or tissues"/>
</dbReference>
<dbReference type="GO" id="GO:0005737">
    <property type="term" value="C:cytoplasm"/>
    <property type="evidence" value="ECO:0000318"/>
    <property type="project" value="GO_Central"/>
</dbReference>
<dbReference type="GO" id="GO:0005768">
    <property type="term" value="C:endosome"/>
    <property type="evidence" value="ECO:0007669"/>
    <property type="project" value="Ensembl"/>
</dbReference>
<dbReference type="GO" id="GO:0009897">
    <property type="term" value="C:external side of plasma membrane"/>
    <property type="evidence" value="ECO:0000250"/>
    <property type="project" value="UniProtKB"/>
</dbReference>
<dbReference type="GO" id="GO:0003779">
    <property type="term" value="F:actin binding"/>
    <property type="evidence" value="ECO:0007669"/>
    <property type="project" value="Ensembl"/>
</dbReference>
<dbReference type="GO" id="GO:0016493">
    <property type="term" value="F:C-C chemokine receptor activity"/>
    <property type="evidence" value="ECO:0000250"/>
    <property type="project" value="UniProtKB"/>
</dbReference>
<dbReference type="GO" id="GO:0071791">
    <property type="term" value="F:chemokine (C-C motif) ligand 5 binding"/>
    <property type="evidence" value="ECO:0000318"/>
    <property type="project" value="GO_Central"/>
</dbReference>
<dbReference type="GO" id="GO:0042802">
    <property type="term" value="F:identical protein binding"/>
    <property type="evidence" value="ECO:0007669"/>
    <property type="project" value="Ensembl"/>
</dbReference>
<dbReference type="GO" id="GO:0019722">
    <property type="term" value="P:calcium-mediated signaling"/>
    <property type="evidence" value="ECO:0000318"/>
    <property type="project" value="GO_Central"/>
</dbReference>
<dbReference type="GO" id="GO:0060326">
    <property type="term" value="P:cell chemotaxis"/>
    <property type="evidence" value="ECO:0000318"/>
    <property type="project" value="GO_Central"/>
</dbReference>
<dbReference type="GO" id="GO:0007267">
    <property type="term" value="P:cell-cell signaling"/>
    <property type="evidence" value="ECO:0007669"/>
    <property type="project" value="Ensembl"/>
</dbReference>
<dbReference type="GO" id="GO:0071222">
    <property type="term" value="P:cellular response to lipopolysaccharide"/>
    <property type="evidence" value="ECO:0007669"/>
    <property type="project" value="Ensembl"/>
</dbReference>
<dbReference type="GO" id="GO:0006955">
    <property type="term" value="P:immune response"/>
    <property type="evidence" value="ECO:0000318"/>
    <property type="project" value="GO_Central"/>
</dbReference>
<dbReference type="GO" id="GO:0006954">
    <property type="term" value="P:inflammatory response"/>
    <property type="evidence" value="ECO:0000318"/>
    <property type="project" value="GO_Central"/>
</dbReference>
<dbReference type="GO" id="GO:0000165">
    <property type="term" value="P:MAPK cascade"/>
    <property type="evidence" value="ECO:0007669"/>
    <property type="project" value="Ensembl"/>
</dbReference>
<dbReference type="GO" id="GO:0007204">
    <property type="term" value="P:positive regulation of cytosolic calcium ion concentration"/>
    <property type="evidence" value="ECO:0000318"/>
    <property type="project" value="GO_Central"/>
</dbReference>
<dbReference type="GO" id="GO:0014808">
    <property type="term" value="P:release of sequestered calcium ion into cytosol by sarcoplasmic reticulum"/>
    <property type="evidence" value="ECO:0007669"/>
    <property type="project" value="Ensembl"/>
</dbReference>
<dbReference type="GO" id="GO:0070723">
    <property type="term" value="P:response to cholesterol"/>
    <property type="evidence" value="ECO:0007669"/>
    <property type="project" value="Ensembl"/>
</dbReference>
<dbReference type="CDD" id="cd15184">
    <property type="entry name" value="7tmA_CCR5_CCR2"/>
    <property type="match status" value="1"/>
</dbReference>
<dbReference type="FunFam" id="1.20.1070.10:FF:000026">
    <property type="entry name" value="C-C chemokine receptor type 5"/>
    <property type="match status" value="1"/>
</dbReference>
<dbReference type="Gene3D" id="1.20.1070.10">
    <property type="entry name" value="Rhodopsin 7-helix transmembrane proteins"/>
    <property type="match status" value="1"/>
</dbReference>
<dbReference type="InterPro" id="IPR050119">
    <property type="entry name" value="CCR1-9-like"/>
</dbReference>
<dbReference type="InterPro" id="IPR002240">
    <property type="entry name" value="Chemokine_CCR5"/>
</dbReference>
<dbReference type="InterPro" id="IPR000355">
    <property type="entry name" value="Chemokine_rcpt"/>
</dbReference>
<dbReference type="InterPro" id="IPR000276">
    <property type="entry name" value="GPCR_Rhodpsn"/>
</dbReference>
<dbReference type="InterPro" id="IPR017452">
    <property type="entry name" value="GPCR_Rhodpsn_7TM"/>
</dbReference>
<dbReference type="PANTHER" id="PTHR10489:SF686">
    <property type="entry name" value="C-C CHEMOKINE RECEPTOR TYPE 5"/>
    <property type="match status" value="1"/>
</dbReference>
<dbReference type="PANTHER" id="PTHR10489">
    <property type="entry name" value="CELL ADHESION MOLECULE"/>
    <property type="match status" value="1"/>
</dbReference>
<dbReference type="Pfam" id="PF00001">
    <property type="entry name" value="7tm_1"/>
    <property type="match status" value="1"/>
</dbReference>
<dbReference type="PRINTS" id="PR00657">
    <property type="entry name" value="CCCHEMOKINER"/>
</dbReference>
<dbReference type="PRINTS" id="PR01110">
    <property type="entry name" value="CHEMOKINER5"/>
</dbReference>
<dbReference type="PRINTS" id="PR00237">
    <property type="entry name" value="GPCRRHODOPSN"/>
</dbReference>
<dbReference type="SMART" id="SM01381">
    <property type="entry name" value="7TM_GPCR_Srsx"/>
    <property type="match status" value="1"/>
</dbReference>
<dbReference type="SUPFAM" id="SSF81321">
    <property type="entry name" value="Family A G protein-coupled receptor-like"/>
    <property type="match status" value="1"/>
</dbReference>
<dbReference type="PROSITE" id="PS00237">
    <property type="entry name" value="G_PROTEIN_RECEP_F1_1"/>
    <property type="match status" value="1"/>
</dbReference>
<dbReference type="PROSITE" id="PS50262">
    <property type="entry name" value="G_PROTEIN_RECEP_F1_2"/>
    <property type="match status" value="1"/>
</dbReference>
<comment type="function">
    <text evidence="1">Receptor for a number of inflammatory CC-chemokines including CCL3/MIP-1-alpha, CCL4/MIP-1-beta and RANTES and subsequently transduces a signal by increasing the intracellular calcium ion level. May play a role in the control of granulocytic lineage proliferation or differentiation. Participates in T-lymphocyte migration to the infection site by acting as a chemotactic receptor.</text>
</comment>
<comment type="subunit">
    <text evidence="1">Interacts with PRAF2. Efficient ligand binding to CCL3/MIP-1alpha and CCL4/MIP-1beta requires sulfation, O-glycosylation and sialic acid modifications. Glycosylation on Ser-6 is required for efficient binding of CCL4. Interacts with GRK2. Interacts with ARRB1 and ARRB2. Interacts with CNIH4. Interacts with S100A4; this interaction stimulates T-lymphocyte chemotaxis.</text>
</comment>
<comment type="subcellular location">
    <subcellularLocation>
        <location evidence="2">Cell membrane</location>
        <topology evidence="2">Multi-pass membrane protein</topology>
    </subcellularLocation>
</comment>
<comment type="PTM">
    <text evidence="1">Sulfated on at least 2 of the N-terminal tyrosines. Sulfation is required for efficient binding of the chemokines, CCL3 and CCL4 (By similarity).</text>
</comment>
<comment type="PTM">
    <text evidence="1">O-glycosylated, but not N-glycosylated. Ser-6 appears to be the major site. Also sialylated glycans present which contribute to chemokine binding. Ser-17 may also be glycosylated and, if so, with small moieties such as a T-antigen (By similarity).</text>
</comment>
<comment type="PTM">
    <text evidence="1">Palmitoylation in the C-terminal is important for cell surface expression.</text>
</comment>
<comment type="PTM">
    <text evidence="1">Phosphorylation on serine residues in the C-terminal is stimulated by binding CC chemokines especially by APO-RANTES.</text>
</comment>
<comment type="similarity">
    <text evidence="4">Belongs to the G-protein coupled receptor 1 family.</text>
</comment>
<name>CCR5_BOVIN</name>
<proteinExistence type="evidence at transcript level"/>
<feature type="chain" id="PRO_0000245012" description="C-C chemokine receptor type 5">
    <location>
        <begin position="1"/>
        <end position="352"/>
    </location>
</feature>
<feature type="topological domain" description="Extracellular" evidence="3">
    <location>
        <begin position="1"/>
        <end position="30"/>
    </location>
</feature>
<feature type="transmembrane region" description="Helical; Name=1" evidence="3">
    <location>
        <begin position="31"/>
        <end position="58"/>
    </location>
</feature>
<feature type="topological domain" description="Cytoplasmic" evidence="3">
    <location>
        <begin position="59"/>
        <end position="68"/>
    </location>
</feature>
<feature type="transmembrane region" description="Helical; Name=2" evidence="3">
    <location>
        <begin position="69"/>
        <end position="89"/>
    </location>
</feature>
<feature type="topological domain" description="Extracellular" evidence="3">
    <location>
        <begin position="90"/>
        <end position="102"/>
    </location>
</feature>
<feature type="transmembrane region" description="Helical; Name=3" evidence="3">
    <location>
        <begin position="103"/>
        <end position="124"/>
    </location>
</feature>
<feature type="topological domain" description="Cytoplasmic" evidence="3">
    <location>
        <begin position="125"/>
        <end position="141"/>
    </location>
</feature>
<feature type="transmembrane region" description="Helical; Name=4" evidence="3">
    <location>
        <begin position="142"/>
        <end position="166"/>
    </location>
</feature>
<feature type="topological domain" description="Extracellular" evidence="3">
    <location>
        <begin position="167"/>
        <end position="198"/>
    </location>
</feature>
<feature type="transmembrane region" description="Helical; Name=5" evidence="3">
    <location>
        <begin position="199"/>
        <end position="218"/>
    </location>
</feature>
<feature type="topological domain" description="Cytoplasmic" evidence="3">
    <location>
        <begin position="219"/>
        <end position="235"/>
    </location>
</feature>
<feature type="transmembrane region" description="Helical; Name=6" evidence="3">
    <location>
        <begin position="236"/>
        <end position="260"/>
    </location>
</feature>
<feature type="topological domain" description="Extracellular" evidence="3">
    <location>
        <begin position="261"/>
        <end position="277"/>
    </location>
</feature>
<feature type="transmembrane region" description="Helical; Name=7" evidence="3">
    <location>
        <begin position="278"/>
        <end position="301"/>
    </location>
</feature>
<feature type="topological domain" description="Cytoplasmic" evidence="3">
    <location>
        <begin position="302"/>
        <end position="352"/>
    </location>
</feature>
<feature type="modified residue" description="Sulfotyrosine" evidence="1">
    <location>
        <position position="3"/>
    </location>
</feature>
<feature type="modified residue" description="Sulfotyrosine" evidence="3">
    <location>
        <position position="10"/>
    </location>
</feature>
<feature type="modified residue" description="Sulfotyrosine" evidence="3">
    <location>
        <position position="14"/>
    </location>
</feature>
<feature type="modified residue" description="Phosphoserine; by BARK1" evidence="1">
    <location>
        <position position="336"/>
    </location>
</feature>
<feature type="modified residue" description="Phosphoserine; by BARK1" evidence="1">
    <location>
        <position position="337"/>
    </location>
</feature>
<feature type="modified residue" description="Phosphoserine; by BARK1" evidence="1">
    <location>
        <position position="342"/>
    </location>
</feature>
<feature type="modified residue" description="Phosphoserine; by BARK1" evidence="1">
    <location>
        <position position="349"/>
    </location>
</feature>
<feature type="lipid moiety-binding region" description="S-palmitoyl cysteine" evidence="1">
    <location>
        <position position="321"/>
    </location>
</feature>
<feature type="lipid moiety-binding region" description="S-palmitoyl cysteine" evidence="1">
    <location>
        <position position="324"/>
    </location>
</feature>
<feature type="glycosylation site" description="O-linked (GalNAc...) serine" evidence="1">
    <location>
        <position position="6"/>
    </location>
</feature>
<feature type="disulfide bond" evidence="1">
    <location>
        <begin position="20"/>
        <end position="269"/>
    </location>
</feature>
<feature type="disulfide bond" evidence="4">
    <location>
        <begin position="101"/>
        <end position="178"/>
    </location>
</feature>
<feature type="sequence conflict" description="In Ref. 1; AAV97929." evidence="5" ref="1">
    <original>D</original>
    <variation>N</variation>
    <location>
        <position position="11"/>
    </location>
</feature>
<feature type="sequence conflict" description="In Ref. 1; AAV97929." evidence="5" ref="1">
    <original>T</original>
    <variation>A</variation>
    <location>
        <position position="65"/>
    </location>
</feature>
<feature type="sequence conflict" description="In Ref. 1; AAV97929." evidence="5" ref="1">
    <original>F</original>
    <variation>L</variation>
    <location>
        <position position="144"/>
    </location>
</feature>
<feature type="sequence conflict" description="In Ref. 1; AAV97929." evidence="5" ref="1">
    <original>Y</original>
    <variation>H</variation>
    <location>
        <position position="187"/>
    </location>
</feature>
<gene>
    <name type="primary">CCR5</name>
    <name type="synonym">CMKBR5</name>
</gene>
<keyword id="KW-1003">Cell membrane</keyword>
<keyword id="KW-1015">Disulfide bond</keyword>
<keyword id="KW-0297">G-protein coupled receptor</keyword>
<keyword id="KW-0325">Glycoprotein</keyword>
<keyword id="KW-0449">Lipoprotein</keyword>
<keyword id="KW-0472">Membrane</keyword>
<keyword id="KW-0564">Palmitate</keyword>
<keyword id="KW-0597">Phosphoprotein</keyword>
<keyword id="KW-0675">Receptor</keyword>
<keyword id="KW-1185">Reference proteome</keyword>
<keyword id="KW-0765">Sulfation</keyword>
<keyword id="KW-0807">Transducer</keyword>
<keyword id="KW-0812">Transmembrane</keyword>
<keyword id="KW-1133">Transmembrane helix</keyword>
<protein>
    <recommendedName>
        <fullName>C-C chemokine receptor type 5</fullName>
        <shortName>C-C CKR-5</shortName>
        <shortName>CC-CKR-5</shortName>
        <shortName>CCR-5</shortName>
        <shortName>CCR5</shortName>
    </recommendedName>
    <cdAntigenName>CD195</cdAntigenName>
</protein>